<reference key="1">
    <citation type="journal article" date="2004" name="Nature">
        <title>Genome evolution in yeasts.</title>
        <authorList>
            <person name="Dujon B."/>
            <person name="Sherman D."/>
            <person name="Fischer G."/>
            <person name="Durrens P."/>
            <person name="Casaregola S."/>
            <person name="Lafontaine I."/>
            <person name="de Montigny J."/>
            <person name="Marck C."/>
            <person name="Neuveglise C."/>
            <person name="Talla E."/>
            <person name="Goffard N."/>
            <person name="Frangeul L."/>
            <person name="Aigle M."/>
            <person name="Anthouard V."/>
            <person name="Babour A."/>
            <person name="Barbe V."/>
            <person name="Barnay S."/>
            <person name="Blanchin S."/>
            <person name="Beckerich J.-M."/>
            <person name="Beyne E."/>
            <person name="Bleykasten C."/>
            <person name="Boisrame A."/>
            <person name="Boyer J."/>
            <person name="Cattolico L."/>
            <person name="Confanioleri F."/>
            <person name="de Daruvar A."/>
            <person name="Despons L."/>
            <person name="Fabre E."/>
            <person name="Fairhead C."/>
            <person name="Ferry-Dumazet H."/>
            <person name="Groppi A."/>
            <person name="Hantraye F."/>
            <person name="Hennequin C."/>
            <person name="Jauniaux N."/>
            <person name="Joyet P."/>
            <person name="Kachouri R."/>
            <person name="Kerrest A."/>
            <person name="Koszul R."/>
            <person name="Lemaire M."/>
            <person name="Lesur I."/>
            <person name="Ma L."/>
            <person name="Muller H."/>
            <person name="Nicaud J.-M."/>
            <person name="Nikolski M."/>
            <person name="Oztas S."/>
            <person name="Ozier-Kalogeropoulos O."/>
            <person name="Pellenz S."/>
            <person name="Potier S."/>
            <person name="Richard G.-F."/>
            <person name="Straub M.-L."/>
            <person name="Suleau A."/>
            <person name="Swennen D."/>
            <person name="Tekaia F."/>
            <person name="Wesolowski-Louvel M."/>
            <person name="Westhof E."/>
            <person name="Wirth B."/>
            <person name="Zeniou-Meyer M."/>
            <person name="Zivanovic Y."/>
            <person name="Bolotin-Fukuhara M."/>
            <person name="Thierry A."/>
            <person name="Bouchier C."/>
            <person name="Caudron B."/>
            <person name="Scarpelli C."/>
            <person name="Gaillardin C."/>
            <person name="Weissenbach J."/>
            <person name="Wincker P."/>
            <person name="Souciet J.-L."/>
        </authorList>
    </citation>
    <scope>NUCLEOTIDE SEQUENCE [LARGE SCALE GENOMIC DNA]</scope>
    <source>
        <strain>CLIB 122 / E 150</strain>
    </source>
</reference>
<accession>Q6BZQ6</accession>
<dbReference type="EMBL" id="CR382132">
    <property type="protein sequence ID" value="CAG78919.1"/>
    <property type="molecule type" value="Genomic_DNA"/>
</dbReference>
<dbReference type="RefSeq" id="XP_506106.1">
    <property type="nucleotide sequence ID" value="XM_506106.1"/>
</dbReference>
<dbReference type="SMR" id="Q6BZQ6"/>
<dbReference type="FunCoup" id="Q6BZQ6">
    <property type="interactions" value="67"/>
</dbReference>
<dbReference type="STRING" id="284591.Q6BZQ6"/>
<dbReference type="EnsemblFungi" id="CAG78919">
    <property type="protein sequence ID" value="CAG78919"/>
    <property type="gene ID" value="YALI0_F31669g"/>
</dbReference>
<dbReference type="KEGG" id="yli:2908282"/>
<dbReference type="VEuPathDB" id="FungiDB:YALI0_F31669g"/>
<dbReference type="HOGENOM" id="CLU_078260_1_0_1"/>
<dbReference type="InParanoid" id="Q6BZQ6"/>
<dbReference type="OMA" id="FCWLVIH"/>
<dbReference type="OrthoDB" id="94535at4891"/>
<dbReference type="Proteomes" id="UP000001300">
    <property type="component" value="Chromosome F"/>
</dbReference>
<dbReference type="GO" id="GO:0005789">
    <property type="term" value="C:endoplasmic reticulum membrane"/>
    <property type="evidence" value="ECO:0000318"/>
    <property type="project" value="GO_Central"/>
</dbReference>
<dbReference type="GO" id="GO:0012507">
    <property type="term" value="C:ER to Golgi transport vesicle membrane"/>
    <property type="evidence" value="ECO:0000318"/>
    <property type="project" value="GO_Central"/>
</dbReference>
<dbReference type="GO" id="GO:0005794">
    <property type="term" value="C:Golgi apparatus"/>
    <property type="evidence" value="ECO:0000318"/>
    <property type="project" value="GO_Central"/>
</dbReference>
<dbReference type="GO" id="GO:0000139">
    <property type="term" value="C:Golgi membrane"/>
    <property type="evidence" value="ECO:0007669"/>
    <property type="project" value="UniProtKB-SubCell"/>
</dbReference>
<dbReference type="GO" id="GO:0031902">
    <property type="term" value="C:late endosome membrane"/>
    <property type="evidence" value="ECO:0000318"/>
    <property type="project" value="GO_Central"/>
</dbReference>
<dbReference type="GO" id="GO:0031201">
    <property type="term" value="C:SNARE complex"/>
    <property type="evidence" value="ECO:0000318"/>
    <property type="project" value="GO_Central"/>
</dbReference>
<dbReference type="GO" id="GO:0005484">
    <property type="term" value="F:SNAP receptor activity"/>
    <property type="evidence" value="ECO:0000318"/>
    <property type="project" value="GO_Central"/>
</dbReference>
<dbReference type="GO" id="GO:0000149">
    <property type="term" value="F:SNARE binding"/>
    <property type="evidence" value="ECO:0000318"/>
    <property type="project" value="GO_Central"/>
</dbReference>
<dbReference type="GO" id="GO:0006888">
    <property type="term" value="P:endoplasmic reticulum to Golgi vesicle-mediated transport"/>
    <property type="evidence" value="ECO:0000318"/>
    <property type="project" value="GO_Central"/>
</dbReference>
<dbReference type="GO" id="GO:0015031">
    <property type="term" value="P:protein transport"/>
    <property type="evidence" value="ECO:0007669"/>
    <property type="project" value="UniProtKB-KW"/>
</dbReference>
<dbReference type="GO" id="GO:0006906">
    <property type="term" value="P:vesicle fusion"/>
    <property type="evidence" value="ECO:0000318"/>
    <property type="project" value="GO_Central"/>
</dbReference>
<dbReference type="CDD" id="cd15863">
    <property type="entry name" value="SNARE_GS27"/>
    <property type="match status" value="1"/>
</dbReference>
<dbReference type="InterPro" id="IPR027027">
    <property type="entry name" value="GOSR2/Membrin/Bos1"/>
</dbReference>
<dbReference type="PANTHER" id="PTHR21230:SF1">
    <property type="entry name" value="GOLGI SNAP RECEPTOR COMPLEX MEMBER 2"/>
    <property type="match status" value="1"/>
</dbReference>
<dbReference type="PANTHER" id="PTHR21230">
    <property type="entry name" value="VESICLE TRANSPORT V-SNARE PROTEIN VTI1-RELATED"/>
    <property type="match status" value="1"/>
</dbReference>
<dbReference type="Pfam" id="PF12352">
    <property type="entry name" value="V-SNARE_C"/>
    <property type="match status" value="1"/>
</dbReference>
<dbReference type="PIRSF" id="PIRSF028865">
    <property type="entry name" value="Membrin-2"/>
    <property type="match status" value="1"/>
</dbReference>
<keyword id="KW-0256">Endoplasmic reticulum</keyword>
<keyword id="KW-0931">ER-Golgi transport</keyword>
<keyword id="KW-0333">Golgi apparatus</keyword>
<keyword id="KW-0472">Membrane</keyword>
<keyword id="KW-0653">Protein transport</keyword>
<keyword id="KW-1185">Reference proteome</keyword>
<keyword id="KW-0812">Transmembrane</keyword>
<keyword id="KW-1133">Transmembrane helix</keyword>
<keyword id="KW-0813">Transport</keyword>
<sequence>MNAIHNHLVKQNASLKKDLSEFSANPAGAPMSLQGQISATMTSFSRTLDDYSEIINKEHNKEKKEKAEARLARFREELADARSEFKNLRSAREEKTLEENKTALFGDNPYGESRNRNVNRDVPIQPTYTDLTREEGMQREQSSLNQVGQQLDSFIEQGMAALGDLQEQSDILRSTGKKMRSVAETLGLSRETIKMVEKRARQDKRFFYGGIVFMLVCFYYILKWFS</sequence>
<gene>
    <name type="primary">BOS1</name>
    <name type="ordered locus">YALI0F31669g</name>
</gene>
<name>BOS1_YARLI</name>
<proteinExistence type="inferred from homology"/>
<comment type="function">
    <text evidence="1">SNARE required for protein transport between the ER and the Golgi complex.</text>
</comment>
<comment type="subcellular location">
    <subcellularLocation>
        <location evidence="1">Golgi apparatus membrane</location>
        <topology evidence="1">Single-pass type IV membrane protein</topology>
    </subcellularLocation>
    <subcellularLocation>
        <location evidence="1">Endoplasmic reticulum membrane</location>
        <topology evidence="1">Single-pass type IV membrane protein</topology>
    </subcellularLocation>
</comment>
<comment type="similarity">
    <text evidence="3">Belongs to the BOS1 family.</text>
</comment>
<evidence type="ECO:0000250" key="1"/>
<evidence type="ECO:0000255" key="2"/>
<evidence type="ECO:0000305" key="3"/>
<protein>
    <recommendedName>
        <fullName>Protein transport protein BOS1</fullName>
    </recommendedName>
</protein>
<feature type="chain" id="PRO_0000207556" description="Protein transport protein BOS1">
    <location>
        <begin position="1"/>
        <end position="226"/>
    </location>
</feature>
<feature type="topological domain" description="Cytoplasmic" evidence="2">
    <location>
        <begin position="1"/>
        <end position="205"/>
    </location>
</feature>
<feature type="transmembrane region" description="Helical; Anchor for type IV membrane protein" evidence="2">
    <location>
        <begin position="206"/>
        <end position="226"/>
    </location>
</feature>
<organism>
    <name type="scientific">Yarrowia lipolytica (strain CLIB 122 / E 150)</name>
    <name type="common">Yeast</name>
    <name type="synonym">Candida lipolytica</name>
    <dbReference type="NCBI Taxonomy" id="284591"/>
    <lineage>
        <taxon>Eukaryota</taxon>
        <taxon>Fungi</taxon>
        <taxon>Dikarya</taxon>
        <taxon>Ascomycota</taxon>
        <taxon>Saccharomycotina</taxon>
        <taxon>Dipodascomycetes</taxon>
        <taxon>Dipodascales</taxon>
        <taxon>Dipodascales incertae sedis</taxon>
        <taxon>Yarrowia</taxon>
    </lineage>
</organism>